<evidence type="ECO:0000250" key="1"/>
<evidence type="ECO:0000250" key="2">
    <source>
        <dbReference type="UniProtKB" id="Q9H816"/>
    </source>
</evidence>
<evidence type="ECO:0000256" key="3">
    <source>
        <dbReference type="SAM" id="MobiDB-lite"/>
    </source>
</evidence>
<evidence type="ECO:0000269" key="4">
    <source>
    </source>
</evidence>
<evidence type="ECO:0000269" key="5">
    <source>
    </source>
</evidence>
<evidence type="ECO:0000303" key="6">
    <source>
    </source>
</evidence>
<evidence type="ECO:0000303" key="7">
    <source>
    </source>
</evidence>
<evidence type="ECO:0000305" key="8"/>
<name>DCR1B_MOUSE</name>
<accession>Q8C7W7</accession>
<accession>A0JLW2</accession>
<accession>B0V3N9</accession>
<accession>B0V3P0</accession>
<accession>Q3U4P2</accession>
<accession>Q3UUC7</accession>
<accession>Q3UV92</accession>
<accession>Q6NXL4</accession>
<accession>Q8BN95</accession>
<accession>Q8BQS8</accession>
<accession>Q921S0</accession>
<comment type="function">
    <text evidence="2 4 5">5'-3' exonuclease that plays a central role in telomere maintenance and protection during S-phase. Participates in the protection of telomeres against non-homologous end-joining (NHEJ)-mediated repair, thereby ensuring that telomeres do not fuse. Plays a key role in telomeric loop (T loop) formation by being recruited by TERF2 at the leading end telomeres and by processing leading-end telomeres immediately after their replication via its exonuclease activity: generates 3' single-stranded overhang at the leading end telomeres avoiding blunt leading-end telomeres that are vulnerable to end-joining reactions and expose the telomere end in a manner that activates the DNA repair pathways. Together with TERF2, required to protect telomeres from replicative damage during replication by controlling the amount of DNA topoisomerase (TOP1, TOP2A and TOP2B) needed for telomere replication during fork passage and prevent aberrant telomere topology. Also involved in response to DNA damage: plays a role in response to DNA interstrand cross-links (ICLs) by facilitating double-strand break formation. In case of spindle stress, involved in prophase checkpoint. Possesses beta-lactamase activity, catalyzing the hydrolysis of penicillin G and nitrocefin (By similarity). Exhibits no activity towards other beta-lactam antibiotic classes including cephalosporins (cefotaxime) and carbapenems (imipenem) (By similarity).</text>
</comment>
<comment type="catalytic activity">
    <reaction evidence="2">
        <text>a beta-lactam + H2O = a substituted beta-amino acid</text>
        <dbReference type="Rhea" id="RHEA:20401"/>
        <dbReference type="ChEBI" id="CHEBI:15377"/>
        <dbReference type="ChEBI" id="CHEBI:35627"/>
        <dbReference type="ChEBI" id="CHEBI:140347"/>
        <dbReference type="EC" id="3.5.2.6"/>
    </reaction>
</comment>
<comment type="subunit">
    <text evidence="1 5">Interacts with MUS81, MRE11 and FANCD2. Interacts with HSPA2, HSPA8 and HSPA14. Interacts with SPAG5 (By similarity). Interacts with TERF2; the interaction is direct.</text>
</comment>
<comment type="subcellular location">
    <subcellularLocation>
        <location evidence="4 5">Chromosome</location>
        <location evidence="4 5">Telomere</location>
    </subcellularLocation>
    <subcellularLocation>
        <location evidence="1">Nucleus</location>
    </subcellularLocation>
    <subcellularLocation>
        <location evidence="1">Cytoplasm</location>
        <location evidence="1">Cytoskeleton</location>
        <location evidence="1">Microtubule organizing center</location>
        <location evidence="1">Centrosome</location>
    </subcellularLocation>
    <text>Mainly localizes to telomeres, recruited via its interaction with TERF2. During mitosis, localizes to the centrosome.</text>
</comment>
<comment type="alternative products">
    <event type="alternative splicing"/>
    <isoform>
        <id>Q8C7W7-1</id>
        <name>1</name>
        <sequence type="displayed"/>
    </isoform>
    <isoform>
        <id>Q8C7W7-2</id>
        <name>2</name>
        <sequence type="described" ref="VSP_015174"/>
    </isoform>
    <isoform>
        <id>Q8C7W7-3</id>
        <name>3</name>
        <sequence type="described" ref="VSP_015175 VSP_015176"/>
    </isoform>
</comment>
<comment type="domain">
    <text evidence="1">The TBM domain mediates interaction with TERF2.</text>
</comment>
<comment type="PTM">
    <text evidence="1">Ubiquitinated, leading to its degradation. Interaction with TERF2 protects it from ubiquitination (By similarity).</text>
</comment>
<comment type="disruption phenotype">
    <text evidence="4 5">Embryos are smaller than wild-type embryos and neonates die during the first day after birth. Cells activate the ATM kinase at their telomeres in S phase and show leading-end telomere fusions which are accompanied by a reduction in the telomeric overhang signal.</text>
</comment>
<comment type="similarity">
    <text evidence="8">Belongs to the DNA repair metallo-beta-lactamase (DRMBL) family.</text>
</comment>
<comment type="sequence caution" evidence="8">
    <conflict type="erroneous initiation">
        <sequence resource="EMBL-CDS" id="AAH11094"/>
    </conflict>
    <text>Truncated N-terminus.</text>
</comment>
<comment type="sequence caution" evidence="8">
    <conflict type="frameshift">
        <sequence resource="EMBL-CDS" id="BAC39165"/>
    </conflict>
</comment>
<comment type="sequence caution" evidence="8">
    <conflict type="erroneous initiation">
        <sequence resource="EMBL-CDS" id="BAE23379"/>
    </conflict>
    <text>Truncated N-terminus.</text>
</comment>
<gene>
    <name type="primary">Dclre1b</name>
    <name type="synonym">Snm1b</name>
</gene>
<proteinExistence type="evidence at protein level"/>
<reference key="1">
    <citation type="journal article" date="2005" name="Science">
        <title>The transcriptional landscape of the mammalian genome.</title>
        <authorList>
            <person name="Carninci P."/>
            <person name="Kasukawa T."/>
            <person name="Katayama S."/>
            <person name="Gough J."/>
            <person name="Frith M.C."/>
            <person name="Maeda N."/>
            <person name="Oyama R."/>
            <person name="Ravasi T."/>
            <person name="Lenhard B."/>
            <person name="Wells C."/>
            <person name="Kodzius R."/>
            <person name="Shimokawa K."/>
            <person name="Bajic V.B."/>
            <person name="Brenner S.E."/>
            <person name="Batalov S."/>
            <person name="Forrest A.R."/>
            <person name="Zavolan M."/>
            <person name="Davis M.J."/>
            <person name="Wilming L.G."/>
            <person name="Aidinis V."/>
            <person name="Allen J.E."/>
            <person name="Ambesi-Impiombato A."/>
            <person name="Apweiler R."/>
            <person name="Aturaliya R.N."/>
            <person name="Bailey T.L."/>
            <person name="Bansal M."/>
            <person name="Baxter L."/>
            <person name="Beisel K.W."/>
            <person name="Bersano T."/>
            <person name="Bono H."/>
            <person name="Chalk A.M."/>
            <person name="Chiu K.P."/>
            <person name="Choudhary V."/>
            <person name="Christoffels A."/>
            <person name="Clutterbuck D.R."/>
            <person name="Crowe M.L."/>
            <person name="Dalla E."/>
            <person name="Dalrymple B.P."/>
            <person name="de Bono B."/>
            <person name="Della Gatta G."/>
            <person name="di Bernardo D."/>
            <person name="Down T."/>
            <person name="Engstrom P."/>
            <person name="Fagiolini M."/>
            <person name="Faulkner G."/>
            <person name="Fletcher C.F."/>
            <person name="Fukushima T."/>
            <person name="Furuno M."/>
            <person name="Futaki S."/>
            <person name="Gariboldi M."/>
            <person name="Georgii-Hemming P."/>
            <person name="Gingeras T.R."/>
            <person name="Gojobori T."/>
            <person name="Green R.E."/>
            <person name="Gustincich S."/>
            <person name="Harbers M."/>
            <person name="Hayashi Y."/>
            <person name="Hensch T.K."/>
            <person name="Hirokawa N."/>
            <person name="Hill D."/>
            <person name="Huminiecki L."/>
            <person name="Iacono M."/>
            <person name="Ikeo K."/>
            <person name="Iwama A."/>
            <person name="Ishikawa T."/>
            <person name="Jakt M."/>
            <person name="Kanapin A."/>
            <person name="Katoh M."/>
            <person name="Kawasawa Y."/>
            <person name="Kelso J."/>
            <person name="Kitamura H."/>
            <person name="Kitano H."/>
            <person name="Kollias G."/>
            <person name="Krishnan S.P."/>
            <person name="Kruger A."/>
            <person name="Kummerfeld S.K."/>
            <person name="Kurochkin I.V."/>
            <person name="Lareau L.F."/>
            <person name="Lazarevic D."/>
            <person name="Lipovich L."/>
            <person name="Liu J."/>
            <person name="Liuni S."/>
            <person name="McWilliam S."/>
            <person name="Madan Babu M."/>
            <person name="Madera M."/>
            <person name="Marchionni L."/>
            <person name="Matsuda H."/>
            <person name="Matsuzawa S."/>
            <person name="Miki H."/>
            <person name="Mignone F."/>
            <person name="Miyake S."/>
            <person name="Morris K."/>
            <person name="Mottagui-Tabar S."/>
            <person name="Mulder N."/>
            <person name="Nakano N."/>
            <person name="Nakauchi H."/>
            <person name="Ng P."/>
            <person name="Nilsson R."/>
            <person name="Nishiguchi S."/>
            <person name="Nishikawa S."/>
            <person name="Nori F."/>
            <person name="Ohara O."/>
            <person name="Okazaki Y."/>
            <person name="Orlando V."/>
            <person name="Pang K.C."/>
            <person name="Pavan W.J."/>
            <person name="Pavesi G."/>
            <person name="Pesole G."/>
            <person name="Petrovsky N."/>
            <person name="Piazza S."/>
            <person name="Reed J."/>
            <person name="Reid J.F."/>
            <person name="Ring B.Z."/>
            <person name="Ringwald M."/>
            <person name="Rost B."/>
            <person name="Ruan Y."/>
            <person name="Salzberg S.L."/>
            <person name="Sandelin A."/>
            <person name="Schneider C."/>
            <person name="Schoenbach C."/>
            <person name="Sekiguchi K."/>
            <person name="Semple C.A."/>
            <person name="Seno S."/>
            <person name="Sessa L."/>
            <person name="Sheng Y."/>
            <person name="Shibata Y."/>
            <person name="Shimada H."/>
            <person name="Shimada K."/>
            <person name="Silva D."/>
            <person name="Sinclair B."/>
            <person name="Sperling S."/>
            <person name="Stupka E."/>
            <person name="Sugiura K."/>
            <person name="Sultana R."/>
            <person name="Takenaka Y."/>
            <person name="Taki K."/>
            <person name="Tammoja K."/>
            <person name="Tan S.L."/>
            <person name="Tang S."/>
            <person name="Taylor M.S."/>
            <person name="Tegner J."/>
            <person name="Teichmann S.A."/>
            <person name="Ueda H.R."/>
            <person name="van Nimwegen E."/>
            <person name="Verardo R."/>
            <person name="Wei C.L."/>
            <person name="Yagi K."/>
            <person name="Yamanishi H."/>
            <person name="Zabarovsky E."/>
            <person name="Zhu S."/>
            <person name="Zimmer A."/>
            <person name="Hide W."/>
            <person name="Bult C."/>
            <person name="Grimmond S.M."/>
            <person name="Teasdale R.D."/>
            <person name="Liu E.T."/>
            <person name="Brusic V."/>
            <person name="Quackenbush J."/>
            <person name="Wahlestedt C."/>
            <person name="Mattick J.S."/>
            <person name="Hume D.A."/>
            <person name="Kai C."/>
            <person name="Sasaki D."/>
            <person name="Tomaru Y."/>
            <person name="Fukuda S."/>
            <person name="Kanamori-Katayama M."/>
            <person name="Suzuki M."/>
            <person name="Aoki J."/>
            <person name="Arakawa T."/>
            <person name="Iida J."/>
            <person name="Imamura K."/>
            <person name="Itoh M."/>
            <person name="Kato T."/>
            <person name="Kawaji H."/>
            <person name="Kawagashira N."/>
            <person name="Kawashima T."/>
            <person name="Kojima M."/>
            <person name="Kondo S."/>
            <person name="Konno H."/>
            <person name="Nakano K."/>
            <person name="Ninomiya N."/>
            <person name="Nishio T."/>
            <person name="Okada M."/>
            <person name="Plessy C."/>
            <person name="Shibata K."/>
            <person name="Shiraki T."/>
            <person name="Suzuki S."/>
            <person name="Tagami M."/>
            <person name="Waki K."/>
            <person name="Watahiki A."/>
            <person name="Okamura-Oho Y."/>
            <person name="Suzuki H."/>
            <person name="Kawai J."/>
            <person name="Hayashizaki Y."/>
        </authorList>
    </citation>
    <scope>NUCLEOTIDE SEQUENCE [LARGE SCALE MRNA] (ISOFORMS 1; 2 AND 3)</scope>
    <source>
        <strain>C57BL/6J</strain>
        <strain>NOD</strain>
        <tissue>Adipose tissue</tissue>
        <tissue>Bone</tissue>
        <tissue>Eye</tissue>
        <tissue>Spinal cord</tissue>
        <tissue>Testis</tissue>
    </source>
</reference>
<reference key="2">
    <citation type="journal article" date="2009" name="PLoS Biol.">
        <title>Lineage-specific biology revealed by a finished genome assembly of the mouse.</title>
        <authorList>
            <person name="Church D.M."/>
            <person name="Goodstadt L."/>
            <person name="Hillier L.W."/>
            <person name="Zody M.C."/>
            <person name="Goldstein S."/>
            <person name="She X."/>
            <person name="Bult C.J."/>
            <person name="Agarwala R."/>
            <person name="Cherry J.L."/>
            <person name="DiCuccio M."/>
            <person name="Hlavina W."/>
            <person name="Kapustin Y."/>
            <person name="Meric P."/>
            <person name="Maglott D."/>
            <person name="Birtle Z."/>
            <person name="Marques A.C."/>
            <person name="Graves T."/>
            <person name="Zhou S."/>
            <person name="Teague B."/>
            <person name="Potamousis K."/>
            <person name="Churas C."/>
            <person name="Place M."/>
            <person name="Herschleb J."/>
            <person name="Runnheim R."/>
            <person name="Forrest D."/>
            <person name="Amos-Landgraf J."/>
            <person name="Schwartz D.C."/>
            <person name="Cheng Z."/>
            <person name="Lindblad-Toh K."/>
            <person name="Eichler E.E."/>
            <person name="Ponting C.P."/>
        </authorList>
    </citation>
    <scope>NUCLEOTIDE SEQUENCE [LARGE SCALE GENOMIC DNA]</scope>
    <source>
        <strain>C57BL/6J</strain>
    </source>
</reference>
<reference key="3">
    <citation type="journal article" date="2004" name="Genome Res.">
        <title>The status, quality, and expansion of the NIH full-length cDNA project: the Mammalian Gene Collection (MGC).</title>
        <authorList>
            <consortium name="The MGC Project Team"/>
        </authorList>
    </citation>
    <scope>NUCLEOTIDE SEQUENCE [LARGE SCALE MRNA] (ISOFORM 2)</scope>
    <scope>NUCLEOTIDE SEQUENCE [LARGE SCALE MRNA] OF 82-541 (ISOFORM 1)</scope>
    <source>
        <strain>Czech II</strain>
        <tissue>Brain</tissue>
        <tissue>Mammary gland</tissue>
    </source>
</reference>
<reference key="4">
    <citation type="journal article" date="2010" name="EMBO J.">
        <title>SNMIB/Apollo protects leading-strand telomeres against NHEJ-mediated repair.</title>
        <authorList>
            <person name="Lam Y.C."/>
            <person name="Akhter S."/>
            <person name="Gu P."/>
            <person name="Ye J."/>
            <person name="Poulet A."/>
            <person name="Giraud-Panis M.J."/>
            <person name="Bailey S.M."/>
            <person name="Gilson E."/>
            <person name="Legerski R.J."/>
            <person name="Chang S."/>
        </authorList>
    </citation>
    <scope>FUNCTION</scope>
    <scope>SUBCELLULAR LOCATION</scope>
    <scope>DISRUPTION PHENOTYPE</scope>
    <scope>MUTAGENESIS OF ASP-14</scope>
</reference>
<reference key="5">
    <citation type="journal article" date="2010" name="Mol. Cell">
        <title>Apollo contributes to G overhang maintenance and protects leading-end telomeres.</title>
        <authorList>
            <person name="Wu P."/>
            <person name="van Overbeek M."/>
            <person name="Rooney S."/>
            <person name="de Lange T."/>
        </authorList>
    </citation>
    <scope>FUNCTION</scope>
    <scope>SUBCELLULAR LOCATION</scope>
    <scope>INTERACTION WITH TERF2</scope>
    <scope>DISRUPTION PHENOTYPE</scope>
    <scope>MUTAGENESIS OF 31-HIS--ASP-35; HIS-230 AND 500-TYR--PRO-504</scope>
</reference>
<dbReference type="EC" id="3.1.-.-"/>
<dbReference type="EC" id="3.5.2.6" evidence="2"/>
<dbReference type="EMBL" id="AK046571">
    <property type="protein sequence ID" value="BAC32791.1"/>
    <property type="molecule type" value="mRNA"/>
</dbReference>
<dbReference type="EMBL" id="AK049115">
    <property type="protein sequence ID" value="BAC33550.1"/>
    <property type="molecule type" value="mRNA"/>
</dbReference>
<dbReference type="EMBL" id="AK084347">
    <property type="protein sequence ID" value="BAC39165.1"/>
    <property type="status" value="ALT_FRAME"/>
    <property type="molecule type" value="mRNA"/>
</dbReference>
<dbReference type="EMBL" id="AK134324">
    <property type="protein sequence ID" value="BAE22098.1"/>
    <property type="molecule type" value="mRNA"/>
</dbReference>
<dbReference type="EMBL" id="AK137495">
    <property type="protein sequence ID" value="BAE23379.1"/>
    <property type="status" value="ALT_INIT"/>
    <property type="molecule type" value="mRNA"/>
</dbReference>
<dbReference type="EMBL" id="AK138568">
    <property type="protein sequence ID" value="BAE23700.1"/>
    <property type="molecule type" value="mRNA"/>
</dbReference>
<dbReference type="EMBL" id="AK154124">
    <property type="protein sequence ID" value="BAE32389.1"/>
    <property type="molecule type" value="mRNA"/>
</dbReference>
<dbReference type="EMBL" id="CU210953">
    <property type="status" value="NOT_ANNOTATED_CDS"/>
    <property type="molecule type" value="Genomic_DNA"/>
</dbReference>
<dbReference type="EMBL" id="BC011094">
    <property type="protein sequence ID" value="AAH11094.1"/>
    <property type="status" value="ALT_INIT"/>
    <property type="molecule type" value="mRNA"/>
</dbReference>
<dbReference type="EMBL" id="BC067017">
    <property type="protein sequence ID" value="AAH67017.1"/>
    <property type="molecule type" value="mRNA"/>
</dbReference>
<dbReference type="EMBL" id="BC125277">
    <property type="protein sequence ID" value="AAI25278.1"/>
    <property type="molecule type" value="mRNA"/>
</dbReference>
<dbReference type="CCDS" id="CCDS17694.1">
    <molecule id="Q8C7W7-1"/>
</dbReference>
<dbReference type="CCDS" id="CCDS17695.1">
    <molecule id="Q8C7W7-2"/>
</dbReference>
<dbReference type="RefSeq" id="NP_001020483.1">
    <molecule id="Q8C7W7-2"/>
    <property type="nucleotide sequence ID" value="NM_001025312.1"/>
</dbReference>
<dbReference type="RefSeq" id="NP_598626.2">
    <molecule id="Q8C7W7-1"/>
    <property type="nucleotide sequence ID" value="NM_133865.2"/>
</dbReference>
<dbReference type="SMR" id="Q8C7W7"/>
<dbReference type="BioGRID" id="228331">
    <property type="interactions" value="10"/>
</dbReference>
<dbReference type="FunCoup" id="Q8C7W7">
    <property type="interactions" value="2653"/>
</dbReference>
<dbReference type="IntAct" id="Q8C7W7">
    <property type="interactions" value="8"/>
</dbReference>
<dbReference type="STRING" id="10090.ENSMUSP00000029435"/>
<dbReference type="iPTMnet" id="Q8C7W7"/>
<dbReference type="PhosphoSitePlus" id="Q8C7W7"/>
<dbReference type="PaxDb" id="10090-ENSMUSP00000029435"/>
<dbReference type="ProteomicsDB" id="279394">
    <molecule id="Q8C7W7-1"/>
</dbReference>
<dbReference type="ProteomicsDB" id="279395">
    <molecule id="Q8C7W7-2"/>
</dbReference>
<dbReference type="ProteomicsDB" id="279396">
    <molecule id="Q8C7W7-3"/>
</dbReference>
<dbReference type="Antibodypedia" id="46943">
    <property type="antibodies" value="156 antibodies from 24 providers"/>
</dbReference>
<dbReference type="DNASU" id="140917"/>
<dbReference type="Ensembl" id="ENSMUST00000029435.15">
    <molecule id="Q8C7W7-1"/>
    <property type="protein sequence ID" value="ENSMUSP00000029435.9"/>
    <property type="gene ID" value="ENSMUSG00000027845.16"/>
</dbReference>
<dbReference type="Ensembl" id="ENSMUST00000063502.13">
    <molecule id="Q8C7W7-2"/>
    <property type="protein sequence ID" value="ENSMUSP00000067695.7"/>
    <property type="gene ID" value="ENSMUSG00000027845.16"/>
</dbReference>
<dbReference type="Ensembl" id="ENSMUST00000106832.2">
    <molecule id="Q8C7W7-3"/>
    <property type="protein sequence ID" value="ENSMUSP00000102445.2"/>
    <property type="gene ID" value="ENSMUSG00000027845.16"/>
</dbReference>
<dbReference type="Ensembl" id="ENSMUST00000106834.8">
    <molecule id="Q8C7W7-1"/>
    <property type="protein sequence ID" value="ENSMUSP00000102447.2"/>
    <property type="gene ID" value="ENSMUSG00000027845.16"/>
</dbReference>
<dbReference type="GeneID" id="140917"/>
<dbReference type="KEGG" id="mmu:140917"/>
<dbReference type="UCSC" id="uc008qtl.1">
    <molecule id="Q8C7W7-1"/>
    <property type="organism name" value="mouse"/>
</dbReference>
<dbReference type="UCSC" id="uc008qtp.1">
    <molecule id="Q8C7W7-3"/>
    <property type="organism name" value="mouse"/>
</dbReference>
<dbReference type="AGR" id="MGI:2156057"/>
<dbReference type="CTD" id="64858"/>
<dbReference type="MGI" id="MGI:2156057">
    <property type="gene designation" value="Dclre1b"/>
</dbReference>
<dbReference type="VEuPathDB" id="HostDB:ENSMUSG00000027845"/>
<dbReference type="eggNOG" id="KOG1361">
    <property type="taxonomic scope" value="Eukaryota"/>
</dbReference>
<dbReference type="GeneTree" id="ENSGT00940000158175"/>
<dbReference type="HOGENOM" id="CLU_034741_0_0_1"/>
<dbReference type="InParanoid" id="Q8C7W7"/>
<dbReference type="OMA" id="NQRAWMG"/>
<dbReference type="OrthoDB" id="262529at2759"/>
<dbReference type="PhylomeDB" id="Q8C7W7"/>
<dbReference type="TreeFam" id="TF329572"/>
<dbReference type="Reactome" id="R-MMU-6783310">
    <property type="pathway name" value="Fanconi Anemia Pathway"/>
</dbReference>
<dbReference type="BioGRID-ORCS" id="140917">
    <property type="hits" value="23 hits in 112 CRISPR screens"/>
</dbReference>
<dbReference type="PRO" id="PR:Q8C7W7"/>
<dbReference type="Proteomes" id="UP000000589">
    <property type="component" value="Chromosome 3"/>
</dbReference>
<dbReference type="RNAct" id="Q8C7W7">
    <property type="molecule type" value="protein"/>
</dbReference>
<dbReference type="Bgee" id="ENSMUSG00000027845">
    <property type="expression patterns" value="Expressed in granulocyte and 232 other cell types or tissues"/>
</dbReference>
<dbReference type="ExpressionAtlas" id="Q8C7W7">
    <property type="expression patterns" value="baseline and differential"/>
</dbReference>
<dbReference type="GO" id="GO:0005813">
    <property type="term" value="C:centrosome"/>
    <property type="evidence" value="ECO:0000250"/>
    <property type="project" value="UniProtKB"/>
</dbReference>
<dbReference type="GO" id="GO:0000781">
    <property type="term" value="C:chromosome, telomeric region"/>
    <property type="evidence" value="ECO:0000314"/>
    <property type="project" value="UniProtKB"/>
</dbReference>
<dbReference type="GO" id="GO:0005737">
    <property type="term" value="C:cytoplasm"/>
    <property type="evidence" value="ECO:0007669"/>
    <property type="project" value="UniProtKB-KW"/>
</dbReference>
<dbReference type="GO" id="GO:0016604">
    <property type="term" value="C:nuclear body"/>
    <property type="evidence" value="ECO:0007669"/>
    <property type="project" value="Ensembl"/>
</dbReference>
<dbReference type="GO" id="GO:0005634">
    <property type="term" value="C:nucleus"/>
    <property type="evidence" value="ECO:0000247"/>
    <property type="project" value="MGI"/>
</dbReference>
<dbReference type="GO" id="GO:0008409">
    <property type="term" value="F:5'-3' exonuclease activity"/>
    <property type="evidence" value="ECO:0000315"/>
    <property type="project" value="UniProtKB"/>
</dbReference>
<dbReference type="GO" id="GO:0008800">
    <property type="term" value="F:beta-lactamase activity"/>
    <property type="evidence" value="ECO:0000250"/>
    <property type="project" value="UniProtKB"/>
</dbReference>
<dbReference type="GO" id="GO:0042803">
    <property type="term" value="F:protein homodimerization activity"/>
    <property type="evidence" value="ECO:0007669"/>
    <property type="project" value="Ensembl"/>
</dbReference>
<dbReference type="GO" id="GO:0044877">
    <property type="term" value="F:protein-containing complex binding"/>
    <property type="evidence" value="ECO:0007669"/>
    <property type="project" value="Ensembl"/>
</dbReference>
<dbReference type="GO" id="GO:0036297">
    <property type="term" value="P:interstrand cross-link repair"/>
    <property type="evidence" value="ECO:0007669"/>
    <property type="project" value="Ensembl"/>
</dbReference>
<dbReference type="GO" id="GO:0006289">
    <property type="term" value="P:nucleotide-excision repair"/>
    <property type="evidence" value="ECO:0000247"/>
    <property type="project" value="MGI"/>
</dbReference>
<dbReference type="GO" id="GO:0031848">
    <property type="term" value="P:protection from non-homologous end joining at telomere"/>
    <property type="evidence" value="ECO:0000315"/>
    <property type="project" value="UniProtKB"/>
</dbReference>
<dbReference type="GO" id="GO:0000723">
    <property type="term" value="P:telomere maintenance"/>
    <property type="evidence" value="ECO:0000250"/>
    <property type="project" value="UniProtKB"/>
</dbReference>
<dbReference type="GO" id="GO:0010833">
    <property type="term" value="P:telomere maintenance via telomere lengthening"/>
    <property type="evidence" value="ECO:0007669"/>
    <property type="project" value="Ensembl"/>
</dbReference>
<dbReference type="GO" id="GO:0031860">
    <property type="term" value="P:telomeric 3' overhang formation"/>
    <property type="evidence" value="ECO:0000315"/>
    <property type="project" value="UniProtKB"/>
</dbReference>
<dbReference type="GO" id="GO:0031627">
    <property type="term" value="P:telomeric loop formation"/>
    <property type="evidence" value="ECO:0000315"/>
    <property type="project" value="UniProtKB"/>
</dbReference>
<dbReference type="CDD" id="cd16273">
    <property type="entry name" value="SNM1A-1C-like_MBL-fold"/>
    <property type="match status" value="1"/>
</dbReference>
<dbReference type="FunFam" id="3.40.50.12650:FF:000003">
    <property type="entry name" value="DNA cross-link repair 1B"/>
    <property type="match status" value="1"/>
</dbReference>
<dbReference type="FunFam" id="3.60.15.10:FF:000022">
    <property type="entry name" value="DNA cross-link repair 1B"/>
    <property type="match status" value="1"/>
</dbReference>
<dbReference type="Gene3D" id="3.40.50.12650">
    <property type="match status" value="1"/>
</dbReference>
<dbReference type="Gene3D" id="3.60.15.10">
    <property type="entry name" value="Ribonuclease Z/Hydroxyacylglutathione hydrolase-like"/>
    <property type="match status" value="1"/>
</dbReference>
<dbReference type="InterPro" id="IPR011084">
    <property type="entry name" value="DRMBL"/>
</dbReference>
<dbReference type="InterPro" id="IPR036866">
    <property type="entry name" value="RibonucZ/Hydroxyglut_hydro"/>
</dbReference>
<dbReference type="PANTHER" id="PTHR23240:SF26">
    <property type="entry name" value="5' EXONUCLEASE APOLLO"/>
    <property type="match status" value="1"/>
</dbReference>
<dbReference type="PANTHER" id="PTHR23240">
    <property type="entry name" value="DNA CROSS-LINK REPAIR PROTEIN PSO2/SNM1-RELATED"/>
    <property type="match status" value="1"/>
</dbReference>
<dbReference type="Pfam" id="PF07522">
    <property type="entry name" value="DRMBL"/>
    <property type="match status" value="1"/>
</dbReference>
<dbReference type="SUPFAM" id="SSF56281">
    <property type="entry name" value="Metallo-hydrolase/oxidoreductase"/>
    <property type="match status" value="1"/>
</dbReference>
<keyword id="KW-0025">Alternative splicing</keyword>
<keyword id="KW-0158">Chromosome</keyword>
<keyword id="KW-0963">Cytoplasm</keyword>
<keyword id="KW-0206">Cytoskeleton</keyword>
<keyword id="KW-0227">DNA damage</keyword>
<keyword id="KW-0234">DNA repair</keyword>
<keyword id="KW-0269">Exonuclease</keyword>
<keyword id="KW-0378">Hydrolase</keyword>
<keyword id="KW-1017">Isopeptide bond</keyword>
<keyword id="KW-0540">Nuclease</keyword>
<keyword id="KW-0539">Nucleus</keyword>
<keyword id="KW-1185">Reference proteome</keyword>
<keyword id="KW-0779">Telomere</keyword>
<keyword id="KW-0832">Ubl conjugation</keyword>
<protein>
    <recommendedName>
        <fullName>5' exonuclease Apollo</fullName>
        <ecNumber>3.1.-.-</ecNumber>
    </recommendedName>
    <alternativeName>
        <fullName>Beta-lactamase MBLAC2</fullName>
        <ecNumber evidence="2">3.5.2.6</ecNumber>
    </alternativeName>
    <alternativeName>
        <fullName>DNA cross-link repair 1B protein</fullName>
    </alternativeName>
    <alternativeName>
        <fullName>SNM1 homolog B</fullName>
    </alternativeName>
</protein>
<organism>
    <name type="scientific">Mus musculus</name>
    <name type="common">Mouse</name>
    <dbReference type="NCBI Taxonomy" id="10090"/>
    <lineage>
        <taxon>Eukaryota</taxon>
        <taxon>Metazoa</taxon>
        <taxon>Chordata</taxon>
        <taxon>Craniata</taxon>
        <taxon>Vertebrata</taxon>
        <taxon>Euteleostomi</taxon>
        <taxon>Mammalia</taxon>
        <taxon>Eutheria</taxon>
        <taxon>Euarchontoglires</taxon>
        <taxon>Glires</taxon>
        <taxon>Rodentia</taxon>
        <taxon>Myomorpha</taxon>
        <taxon>Muroidea</taxon>
        <taxon>Muridae</taxon>
        <taxon>Murinae</taxon>
        <taxon>Mus</taxon>
        <taxon>Mus</taxon>
    </lineage>
</organism>
<sequence>MNGVVIPQTPIAVDFWSLRRAGSARLFFLTHMHCDHTVGLSSTWARPLYCSPITACLLHRRLQVSKHWIRALEVGESHVLPLDEIGQETMTVTLIDANHCPGSVMFLFEGYFGTILYTGDFRYTPSMLKEPALILGKQIHTLYLDNTNCNPALVLPSRQEATQQIVQLIRQFPQHNIKIGLYSLGKESLLEQLALEFRTWVVLSPQRLELVQLLGLADVFTVEEEAGRIHAVDHTEICHSAMLQWNQSHPTIAIFPTSRKVRSPHPSIYTVPYSDHSSYSELRAFVAALRPCQVVPIVHQKPCGEFFQDSLSPRLAMPLIPHSVQQYMSSSSRKTNVLWQLERRLKRPRTQGVVFESPEEKANQVKVDRDSKKHKKENLSPWAGHLERLCPHPLQARKQLFPDFCRKERDEPVLFCDSNKMATVLTAPLEFSVQLQPIDEFLFPETREKIGLESPLLSRGDSGSPARGNQSDCVGCGSPPAHISRAVPLTPESRGLALKYLLTPVHFLQAGFSSRNFDKQVEKHQRVQRSSPAVLSPVDVG</sequence>
<feature type="chain" id="PRO_0000209120" description="5' exonuclease Apollo">
    <location>
        <begin position="1"/>
        <end position="541"/>
    </location>
</feature>
<feature type="region of interest" description="Disordered" evidence="3">
    <location>
        <begin position="455"/>
        <end position="475"/>
    </location>
</feature>
<feature type="short sequence motif" description="TBM">
    <location>
        <begin position="492"/>
        <end position="507"/>
    </location>
</feature>
<feature type="cross-link" description="Glycyl lysine isopeptide (Lys-Gly) (interchain with G-Cter in SUMO2)" evidence="2">
    <location>
        <position position="334"/>
    </location>
</feature>
<feature type="splice variant" id="VSP_015174" description="In isoform 2." evidence="6 7">
    <location>
        <begin position="1"/>
        <end position="126"/>
    </location>
</feature>
<feature type="splice variant" id="VSP_015175" description="In isoform 3." evidence="7">
    <original>LYSLGKESLLEQLALEFRTWVVLSPQRLELVQL</original>
    <variation>ERFPFFFHSCLVNQNSLKVLIVFQIFVPCSPFL</variation>
    <location>
        <begin position="181"/>
        <end position="213"/>
    </location>
</feature>
<feature type="splice variant" id="VSP_015176" description="In isoform 3." evidence="7">
    <location>
        <begin position="214"/>
        <end position="541"/>
    </location>
</feature>
<feature type="mutagenesis site" description="Abolishes exonuclease activity without affecting the telomere localization, leading to impaired 3'-overhang at the leading end telomeres." evidence="4">
    <original>D</original>
    <variation>A</variation>
    <location>
        <position position="14"/>
    </location>
</feature>
<feature type="mutagenesis site" description="Abolishes exonuclease activity, leading to activate the ATM signaling pathway; when associated with A-230." evidence="5">
    <original>HMHCD</original>
    <variation>AMACN</variation>
    <location>
        <begin position="31"/>
        <end position="35"/>
    </location>
</feature>
<feature type="mutagenesis site" description="Abolishes exonuclease activity, leading to activate the ATM signaling pathway; when associated with 31-A--N-35." evidence="5">
    <original>H</original>
    <variation>A</variation>
    <location>
        <position position="230"/>
    </location>
</feature>
<feature type="mutagenesis site" description="Abolishes interaction with TERF2 and localization to telomeres, leading to activate the ATM signaling pathway." evidence="5">
    <location>
        <begin position="500"/>
        <end position="504"/>
    </location>
</feature>
<feature type="sequence conflict" description="In Ref. 1; BAE23379." evidence="8" ref="1">
    <original>Y</original>
    <variation>D</variation>
    <location>
        <position position="49"/>
    </location>
</feature>
<feature type="sequence conflict" description="In Ref. 1; BAC33550." evidence="8" ref="1">
    <original>T</original>
    <variation>S</variation>
    <location>
        <position position="162"/>
    </location>
</feature>
<feature type="sequence conflict" description="In Ref. 3; AAI25278." evidence="8" ref="3">
    <original>Y</original>
    <variation>H</variation>
    <location>
        <position position="327"/>
    </location>
</feature>
<feature type="sequence conflict" description="In Ref. 3; AAI25278." evidence="8" ref="3">
    <original>P</original>
    <variation>L</variation>
    <location>
        <position position="412"/>
    </location>
</feature>
<feature type="sequence conflict" description="In Ref. 1; BAE23700." evidence="8" ref="1">
    <original>V</original>
    <variation>D</variation>
    <location>
        <position position="540"/>
    </location>
</feature>